<evidence type="ECO:0000256" key="1">
    <source>
        <dbReference type="SAM" id="MobiDB-lite"/>
    </source>
</evidence>
<evidence type="ECO:0000305" key="2"/>
<gene>
    <name type="primary">cry11Bb</name>
    <name type="synonym">cryXIB(b)</name>
</gene>
<dbReference type="EMBL" id="AF017416">
    <property type="protein sequence ID" value="AAC97162.1"/>
    <property type="molecule type" value="Genomic_DNA"/>
</dbReference>
<dbReference type="SMR" id="Q9ZIU5"/>
<dbReference type="TCDB" id="1.C.2.2.3">
    <property type="family name" value="the channel-forming Delta-endotoxin insecticidal crystal protein (icp) family"/>
</dbReference>
<dbReference type="GO" id="GO:0090729">
    <property type="term" value="F:toxin activity"/>
    <property type="evidence" value="ECO:0007669"/>
    <property type="project" value="UniProtKB-KW"/>
</dbReference>
<dbReference type="GO" id="GO:0030435">
    <property type="term" value="P:sporulation resulting in formation of a cellular spore"/>
    <property type="evidence" value="ECO:0007669"/>
    <property type="project" value="UniProtKB-KW"/>
</dbReference>
<dbReference type="GO" id="GO:0001907">
    <property type="term" value="P:symbiont-mediated killing of host cell"/>
    <property type="evidence" value="ECO:0007669"/>
    <property type="project" value="InterPro"/>
</dbReference>
<dbReference type="Gene3D" id="1.20.190.10">
    <property type="entry name" value="Pesticidal crystal protein, N-terminal domain"/>
    <property type="match status" value="1"/>
</dbReference>
<dbReference type="InterPro" id="IPR038979">
    <property type="entry name" value="Pest_crys"/>
</dbReference>
<dbReference type="InterPro" id="IPR005639">
    <property type="entry name" value="Pest_crys_dom_I"/>
</dbReference>
<dbReference type="InterPro" id="IPR036716">
    <property type="entry name" value="Pest_crys_N_sf"/>
</dbReference>
<dbReference type="PANTHER" id="PTHR37003">
    <property type="entry name" value="ENDOTOXIN_N DOMAIN-CONTAINING PROTEIN-RELATED"/>
    <property type="match status" value="1"/>
</dbReference>
<dbReference type="PANTHER" id="PTHR37003:SF2">
    <property type="entry name" value="PESTICIDAL CRYSTAL PROTEIN N-TERMINAL DOMAIN-CONTAINING PROTEIN"/>
    <property type="match status" value="1"/>
</dbReference>
<dbReference type="Pfam" id="PF03945">
    <property type="entry name" value="Endotoxin_N"/>
    <property type="match status" value="1"/>
</dbReference>
<dbReference type="SUPFAM" id="SSF56849">
    <property type="entry name" value="delta-Endotoxin (insectocide), N-terminal domain"/>
    <property type="match status" value="1"/>
</dbReference>
<protein>
    <recommendedName>
        <fullName>Pesticidal crystal protein Cry11Bb</fullName>
    </recommendedName>
    <alternativeName>
        <fullName>84 kDa crystal protein</fullName>
    </alternativeName>
    <alternativeName>
        <fullName>Crystaline entomocidal protoxin</fullName>
    </alternativeName>
    <alternativeName>
        <fullName>Insecticidal delta-endotoxin CryXIB(b)</fullName>
    </alternativeName>
</protein>
<organism>
    <name type="scientific">Bacillus thuringiensis subsp. medellin</name>
    <dbReference type="NCBI Taxonomy" id="79672"/>
    <lineage>
        <taxon>Bacteria</taxon>
        <taxon>Bacillati</taxon>
        <taxon>Bacillota</taxon>
        <taxon>Bacilli</taxon>
        <taxon>Bacillales</taxon>
        <taxon>Bacillaceae</taxon>
        <taxon>Bacillus</taxon>
        <taxon>Bacillus cereus group</taxon>
    </lineage>
</organism>
<name>C11BB_BACTV</name>
<sequence>MENNSFNVLANNNMSSFPLFNSKIEPSIAPALIAVAPIAKYLATALAKWALKQGFAKLKSEIFPGNETATMEKVRLEVQTILNQTLQTDRVATLKAEYEGFIHLGKVFTDYVSQSTFTPATAKTHFLNMSNLLIQRLPQFEIAGYEGVSISLFTQMCTLHLGLLKDGILAGSDWGFTPEDKDSLICQFNRYVNEYNTRMMGLYSIEFGRLLAKNLNEALNFRNMCSLYVFPFSEAWYLLRYEGTKLENTLSLWNFVGEDIGGILHNDWKGALYKLLMGATNQRLANVRFNYSYFSDTQGTIHRENILGAHPTYNGEQTPTGWIGNGRLGRFSAPYSNELEITKVEQEITYNNKGDHSNSIVPANTRNEILTATVPITADPFFKTADINWRYFSQGLYYGWNIKFDDRVILNSRVPGGIPSNRLEYDGYYIRAVSACPRNVPLSYNHNYLTLTYNRLEYDAPTTQNIIVGFSPNNTKSFYARNSHYLSATNDAYVIPALQFATVSDRSFLEDTPDQATDGSIKFTETVLGNEAKYSIRLNTGFNTATRYRLVIRFKATARLAAGIRVRSQNSGNNRLLGGIPVEGNSGWVDYITDSFTFNDLGITTASTNAFFSIDSDGVNASQQWYLSKLILVKDFVNNSGFRNQVPLAPYVIARCPNTFFVSNNTSSGYEQGYNDNYNQNTSSGYEQGYNDNYNQNTSSGYEQGYNDNYNQNTSSGYEQGYNDNYNQNTSSGYEQGYNDNYNQNTSSGV</sequence>
<keyword id="KW-0749">Sporulation</keyword>
<keyword id="KW-0800">Toxin</keyword>
<keyword id="KW-0843">Virulence</keyword>
<comment type="function">
    <text>Promotes colloidosmotic lysis by binding to the midgut epithelial cells of mosquito larvae such as Aedes aegypti, Anopheles albimanus and Culex quinquefasciatus.</text>
</comment>
<comment type="developmental stage">
    <text>The crystal protein is produced during sporulation and is accumulated both as an inclusion and as part of the spore coat.</text>
</comment>
<comment type="miscellaneous">
    <text>Toxic segment of the protein is located in the N-terminus.</text>
</comment>
<comment type="similarity">
    <text evidence="2">Belongs to the delta endotoxin family.</text>
</comment>
<reference key="1">
    <citation type="journal article" date="1998" name="Biochim. Biophys. Acta">
        <title>Sequence of the cry11Bb11 gene from Bacillus thuringiensis subsp. medellin and toxicity analysis of its encoded protein.</title>
        <authorList>
            <person name="Orduz S."/>
            <person name="Realpe M."/>
            <person name="Arango R."/>
            <person name="Murillo L.A."/>
            <person name="Delecluse A."/>
        </authorList>
    </citation>
    <scope>NUCLEOTIDE SEQUENCE [GENOMIC DNA]</scope>
    <source>
        <strain>CIB 163-131</strain>
    </source>
</reference>
<proteinExistence type="evidence at transcript level"/>
<feature type="chain" id="PRO_0000174084" description="Pesticidal crystal protein Cry11Bb">
    <location>
        <begin position="1"/>
        <end position="750"/>
    </location>
</feature>
<feature type="region of interest" description="Disordered" evidence="1">
    <location>
        <begin position="672"/>
        <end position="750"/>
    </location>
</feature>
<accession>Q9ZIU5</accession>